<evidence type="ECO:0000255" key="1">
    <source>
        <dbReference type="HAMAP-Rule" id="MF_01014"/>
    </source>
</evidence>
<name>HIS4_TRIEI</name>
<accession>Q10Y87</accession>
<dbReference type="EC" id="5.3.1.16" evidence="1"/>
<dbReference type="EMBL" id="CP000393">
    <property type="protein sequence ID" value="ABG52787.1"/>
    <property type="molecule type" value="Genomic_DNA"/>
</dbReference>
<dbReference type="RefSeq" id="WP_011613118.1">
    <property type="nucleotide sequence ID" value="NC_008312.1"/>
</dbReference>
<dbReference type="SMR" id="Q10Y87"/>
<dbReference type="STRING" id="203124.Tery_3731"/>
<dbReference type="KEGG" id="ter:Tery_3731"/>
<dbReference type="eggNOG" id="COG0106">
    <property type="taxonomic scope" value="Bacteria"/>
</dbReference>
<dbReference type="HOGENOM" id="CLU_048577_1_1_3"/>
<dbReference type="OrthoDB" id="9807749at2"/>
<dbReference type="UniPathway" id="UPA00031">
    <property type="reaction ID" value="UER00009"/>
</dbReference>
<dbReference type="GO" id="GO:0005737">
    <property type="term" value="C:cytoplasm"/>
    <property type="evidence" value="ECO:0007669"/>
    <property type="project" value="UniProtKB-SubCell"/>
</dbReference>
<dbReference type="GO" id="GO:0003949">
    <property type="term" value="F:1-(5-phosphoribosyl)-5-[(5-phosphoribosylamino)methylideneamino]imidazole-4-carboxamide isomerase activity"/>
    <property type="evidence" value="ECO:0007669"/>
    <property type="project" value="UniProtKB-UniRule"/>
</dbReference>
<dbReference type="GO" id="GO:0000105">
    <property type="term" value="P:L-histidine biosynthetic process"/>
    <property type="evidence" value="ECO:0007669"/>
    <property type="project" value="UniProtKB-UniRule"/>
</dbReference>
<dbReference type="GO" id="GO:0000162">
    <property type="term" value="P:L-tryptophan biosynthetic process"/>
    <property type="evidence" value="ECO:0007669"/>
    <property type="project" value="TreeGrafter"/>
</dbReference>
<dbReference type="CDD" id="cd04732">
    <property type="entry name" value="HisA"/>
    <property type="match status" value="1"/>
</dbReference>
<dbReference type="FunFam" id="3.20.20.70:FF:000009">
    <property type="entry name" value="1-(5-phosphoribosyl)-5-[(5-phosphoribosylamino)methylideneamino] imidazole-4-carboxamide isomerase"/>
    <property type="match status" value="1"/>
</dbReference>
<dbReference type="Gene3D" id="3.20.20.70">
    <property type="entry name" value="Aldolase class I"/>
    <property type="match status" value="1"/>
</dbReference>
<dbReference type="HAMAP" id="MF_01014">
    <property type="entry name" value="HisA"/>
    <property type="match status" value="1"/>
</dbReference>
<dbReference type="InterPro" id="IPR013785">
    <property type="entry name" value="Aldolase_TIM"/>
</dbReference>
<dbReference type="InterPro" id="IPR006062">
    <property type="entry name" value="His_biosynth"/>
</dbReference>
<dbReference type="InterPro" id="IPR006063">
    <property type="entry name" value="HisA_bact_arch"/>
</dbReference>
<dbReference type="InterPro" id="IPR044524">
    <property type="entry name" value="Isoase_HisA-like"/>
</dbReference>
<dbReference type="InterPro" id="IPR023016">
    <property type="entry name" value="Isoase_HisA-like_bact"/>
</dbReference>
<dbReference type="InterPro" id="IPR011060">
    <property type="entry name" value="RibuloseP-bd_barrel"/>
</dbReference>
<dbReference type="NCBIfam" id="TIGR00007">
    <property type="entry name" value="1-(5-phosphoribosyl)-5-[(5-phosphoribosylamino)methylideneamino]imidazole-4-carboxamide isomerase"/>
    <property type="match status" value="1"/>
</dbReference>
<dbReference type="NCBIfam" id="NF010112">
    <property type="entry name" value="PRK13585.1"/>
    <property type="match status" value="1"/>
</dbReference>
<dbReference type="PANTHER" id="PTHR43090">
    <property type="entry name" value="1-(5-PHOSPHORIBOSYL)-5-[(5-PHOSPHORIBOSYLAMINO)METHYLIDENEAMINO] IMIDAZOLE-4-CARBOXAMIDE ISOMERASE"/>
    <property type="match status" value="1"/>
</dbReference>
<dbReference type="PANTHER" id="PTHR43090:SF2">
    <property type="entry name" value="1-(5-PHOSPHORIBOSYL)-5-[(5-PHOSPHORIBOSYLAMINO)METHYLIDENEAMINO] IMIDAZOLE-4-CARBOXAMIDE ISOMERASE"/>
    <property type="match status" value="1"/>
</dbReference>
<dbReference type="Pfam" id="PF00977">
    <property type="entry name" value="His_biosynth"/>
    <property type="match status" value="1"/>
</dbReference>
<dbReference type="SUPFAM" id="SSF51366">
    <property type="entry name" value="Ribulose-phoshate binding barrel"/>
    <property type="match status" value="1"/>
</dbReference>
<keyword id="KW-0028">Amino-acid biosynthesis</keyword>
<keyword id="KW-0963">Cytoplasm</keyword>
<keyword id="KW-0368">Histidine biosynthesis</keyword>
<keyword id="KW-0413">Isomerase</keyword>
<comment type="catalytic activity">
    <reaction evidence="1">
        <text>1-(5-phospho-beta-D-ribosyl)-5-[(5-phospho-beta-D-ribosylamino)methylideneamino]imidazole-4-carboxamide = 5-[(5-phospho-1-deoxy-D-ribulos-1-ylimino)methylamino]-1-(5-phospho-beta-D-ribosyl)imidazole-4-carboxamide</text>
        <dbReference type="Rhea" id="RHEA:15469"/>
        <dbReference type="ChEBI" id="CHEBI:58435"/>
        <dbReference type="ChEBI" id="CHEBI:58525"/>
        <dbReference type="EC" id="5.3.1.16"/>
    </reaction>
</comment>
<comment type="pathway">
    <text evidence="1">Amino-acid biosynthesis; L-histidine biosynthesis; L-histidine from 5-phospho-alpha-D-ribose 1-diphosphate: step 4/9.</text>
</comment>
<comment type="subcellular location">
    <subcellularLocation>
        <location evidence="1">Cytoplasm</location>
    </subcellularLocation>
</comment>
<comment type="similarity">
    <text evidence="1">Belongs to the HisA/HisF family.</text>
</comment>
<protein>
    <recommendedName>
        <fullName evidence="1">1-(5-phosphoribosyl)-5-[(5-phosphoribosylamino)methylideneamino] imidazole-4-carboxamide isomerase</fullName>
        <ecNumber evidence="1">5.3.1.16</ecNumber>
    </recommendedName>
    <alternativeName>
        <fullName evidence="1">Phosphoribosylformimino-5-aminoimidazole carboxamide ribotide isomerase</fullName>
    </alternativeName>
</protein>
<feature type="chain" id="PRO_0000290559" description="1-(5-phosphoribosyl)-5-[(5-phosphoribosylamino)methylideneamino] imidazole-4-carboxamide isomerase">
    <location>
        <begin position="1"/>
        <end position="257"/>
    </location>
</feature>
<feature type="active site" description="Proton acceptor" evidence="1">
    <location>
        <position position="8"/>
    </location>
</feature>
<feature type="active site" description="Proton donor" evidence="1">
    <location>
        <position position="129"/>
    </location>
</feature>
<proteinExistence type="inferred from homology"/>
<reference key="1">
    <citation type="journal article" date="2015" name="Proc. Natl. Acad. Sci. U.S.A.">
        <title>Trichodesmium genome maintains abundant, widespread noncoding DNA in situ, despite oligotrophic lifestyle.</title>
        <authorList>
            <person name="Walworth N."/>
            <person name="Pfreundt U."/>
            <person name="Nelson W.C."/>
            <person name="Mincer T."/>
            <person name="Heidelberg J.F."/>
            <person name="Fu F."/>
            <person name="Waterbury J.B."/>
            <person name="Glavina del Rio T."/>
            <person name="Goodwin L."/>
            <person name="Kyrpides N.C."/>
            <person name="Land M.L."/>
            <person name="Woyke T."/>
            <person name="Hutchins D.A."/>
            <person name="Hess W.R."/>
            <person name="Webb E.A."/>
        </authorList>
    </citation>
    <scope>NUCLEOTIDE SEQUENCE [LARGE SCALE GENOMIC DNA]</scope>
    <source>
        <strain>IMS101</strain>
    </source>
</reference>
<gene>
    <name evidence="1" type="primary">hisA</name>
    <name type="ordered locus">Tery_3731</name>
</gene>
<sequence>MNIIPAIDILGGRCVRLYQGDYKQTQIFNDNPVDVAKRWADEGATKLHLVDLDAAKVGQPVNQKTIEAIIKAVDIPIQVGGGLRNYSTVASLLALGVQQAILGTVAIEQPELVSDFCQKFPGQIIVGIDARDGKVATKGWLETSQVLATDLALQMAKLKVAAIIYTDIHRDGTLKGPNIEALRELATAVSIPVIASGGISSINDLLNLLALETIGVKGAIVGRALYTGGISLKEANQAVGQGRWQDVPPNLGSSTFV</sequence>
<organism>
    <name type="scientific">Trichodesmium erythraeum (strain IMS101)</name>
    <dbReference type="NCBI Taxonomy" id="203124"/>
    <lineage>
        <taxon>Bacteria</taxon>
        <taxon>Bacillati</taxon>
        <taxon>Cyanobacteriota</taxon>
        <taxon>Cyanophyceae</taxon>
        <taxon>Oscillatoriophycideae</taxon>
        <taxon>Oscillatoriales</taxon>
        <taxon>Microcoleaceae</taxon>
        <taxon>Trichodesmium</taxon>
    </lineage>
</organism>